<feature type="chain" id="PRO_0000164390" description="Putative nucleotidase BH1399">
    <location>
        <begin position="1"/>
        <end position="195"/>
    </location>
</feature>
<accession>Q9KD20</accession>
<proteinExistence type="inferred from homology"/>
<protein>
    <recommendedName>
        <fullName>Putative nucleotidase BH1399</fullName>
        <ecNumber>3.1.3.-</ecNumber>
    </recommendedName>
</protein>
<comment type="similarity">
    <text evidence="1">Belongs to the 5'(3')-deoxyribonucleotidase family.</text>
</comment>
<reference key="1">
    <citation type="journal article" date="2000" name="Nucleic Acids Res.">
        <title>Complete genome sequence of the alkaliphilic bacterium Bacillus halodurans and genomic sequence comparison with Bacillus subtilis.</title>
        <authorList>
            <person name="Takami H."/>
            <person name="Nakasone K."/>
            <person name="Takaki Y."/>
            <person name="Maeno G."/>
            <person name="Sasaki R."/>
            <person name="Masui N."/>
            <person name="Fuji F."/>
            <person name="Hirama C."/>
            <person name="Nakamura Y."/>
            <person name="Ogasawara N."/>
            <person name="Kuhara S."/>
            <person name="Horikoshi K."/>
        </authorList>
    </citation>
    <scope>NUCLEOTIDE SEQUENCE [LARGE SCALE GENOMIC DNA]</scope>
    <source>
        <strain>ATCC BAA-125 / DSM 18197 / FERM 7344 / JCM 9153 / C-125</strain>
    </source>
</reference>
<sequence length="195" mass="23039">MTVRKQKRFGLDIDGTVTDPATFLPYLNEQFQKTLTLEDITDYDLTKSLGITSEEFWKWMEQHEQTIYKQAKKADGVDQVLEEWKQEHELIYITARASHLEEITKNWFEQQNLPFHHIELVGKHDKIEAIRTHEIDIFFEDKHDNAVAIAETFAIPVILMDTPYNRLPTPANVVRINHWTEAKAWVDEWLKRSGF</sequence>
<dbReference type="EC" id="3.1.3.-"/>
<dbReference type="EMBL" id="BA000004">
    <property type="protein sequence ID" value="BAB05118.1"/>
    <property type="molecule type" value="Genomic_DNA"/>
</dbReference>
<dbReference type="PIR" id="G83824">
    <property type="entry name" value="G83824"/>
</dbReference>
<dbReference type="RefSeq" id="WP_010897564.1">
    <property type="nucleotide sequence ID" value="NC_002570.2"/>
</dbReference>
<dbReference type="SMR" id="Q9KD20"/>
<dbReference type="STRING" id="272558.gene:10727293"/>
<dbReference type="DNASU" id="890693"/>
<dbReference type="GeneID" id="87597023"/>
<dbReference type="KEGG" id="bha:BH1399"/>
<dbReference type="eggNOG" id="COG5663">
    <property type="taxonomic scope" value="Bacteria"/>
</dbReference>
<dbReference type="HOGENOM" id="CLU_118515_0_0_9"/>
<dbReference type="OrthoDB" id="2471595at2"/>
<dbReference type="Proteomes" id="UP000001258">
    <property type="component" value="Chromosome"/>
</dbReference>
<dbReference type="GO" id="GO:0008253">
    <property type="term" value="F:5'-nucleotidase activity"/>
    <property type="evidence" value="ECO:0007669"/>
    <property type="project" value="InterPro"/>
</dbReference>
<dbReference type="GO" id="GO:0009264">
    <property type="term" value="P:deoxyribonucleotide catabolic process"/>
    <property type="evidence" value="ECO:0007669"/>
    <property type="project" value="InterPro"/>
</dbReference>
<dbReference type="Gene3D" id="3.40.50.1000">
    <property type="entry name" value="HAD superfamily/HAD-like"/>
    <property type="match status" value="1"/>
</dbReference>
<dbReference type="InterPro" id="IPR010708">
    <property type="entry name" value="5'(3')-deoxyribonucleotidase"/>
</dbReference>
<dbReference type="InterPro" id="IPR052419">
    <property type="entry name" value="5_3-deoxyribonucleotidase-like"/>
</dbReference>
<dbReference type="InterPro" id="IPR036412">
    <property type="entry name" value="HAD-like_sf"/>
</dbReference>
<dbReference type="InterPro" id="IPR023214">
    <property type="entry name" value="HAD_sf"/>
</dbReference>
<dbReference type="InterPro" id="IPR009206">
    <property type="entry name" value="Nucleotidase_putative"/>
</dbReference>
<dbReference type="PANTHER" id="PTHR35134">
    <property type="entry name" value="NUCLEOTIDASE YQFW-RELATED"/>
    <property type="match status" value="1"/>
</dbReference>
<dbReference type="PANTHER" id="PTHR35134:SF2">
    <property type="entry name" value="NUCLEOTIDASE YQFW-RELATED"/>
    <property type="match status" value="1"/>
</dbReference>
<dbReference type="Pfam" id="PF06941">
    <property type="entry name" value="NT5C"/>
    <property type="match status" value="1"/>
</dbReference>
<dbReference type="PIRSF" id="PIRSF021362">
    <property type="entry name" value="UCP021362_HAD"/>
    <property type="match status" value="1"/>
</dbReference>
<dbReference type="SUPFAM" id="SSF56784">
    <property type="entry name" value="HAD-like"/>
    <property type="match status" value="1"/>
</dbReference>
<evidence type="ECO:0000305" key="1"/>
<name>Y1399_HALH5</name>
<keyword id="KW-0378">Hydrolase</keyword>
<keyword id="KW-1185">Reference proteome</keyword>
<organism>
    <name type="scientific">Halalkalibacterium halodurans (strain ATCC BAA-125 / DSM 18197 / FERM 7344 / JCM 9153 / C-125)</name>
    <name type="common">Bacillus halodurans</name>
    <dbReference type="NCBI Taxonomy" id="272558"/>
    <lineage>
        <taxon>Bacteria</taxon>
        <taxon>Bacillati</taxon>
        <taxon>Bacillota</taxon>
        <taxon>Bacilli</taxon>
        <taxon>Bacillales</taxon>
        <taxon>Bacillaceae</taxon>
        <taxon>Halalkalibacterium (ex Joshi et al. 2022)</taxon>
    </lineage>
</organism>
<gene>
    <name type="ordered locus">BH1399</name>
</gene>